<name>MSIR6_DROME</name>
<dbReference type="EMBL" id="AE014296">
    <property type="protein sequence ID" value="AAF49366.3"/>
    <property type="molecule type" value="Genomic_DNA"/>
</dbReference>
<dbReference type="EMBL" id="AE014296">
    <property type="protein sequence ID" value="ABW08559.1"/>
    <property type="molecule type" value="Genomic_DNA"/>
</dbReference>
<dbReference type="EMBL" id="AE014296">
    <property type="protein sequence ID" value="ABW08560.1"/>
    <property type="molecule type" value="Genomic_DNA"/>
</dbReference>
<dbReference type="EMBL" id="AY122226">
    <property type="protein sequence ID" value="AAM52738.1"/>
    <property type="molecule type" value="mRNA"/>
</dbReference>
<dbReference type="EMBL" id="S51715">
    <property type="protein sequence ID" value="AAB24627.1"/>
    <property type="molecule type" value="mRNA"/>
</dbReference>
<dbReference type="PIR" id="F48110">
    <property type="entry name" value="F48110"/>
</dbReference>
<dbReference type="RefSeq" id="NP_001097631.1">
    <molecule id="Q9VVE5-2"/>
    <property type="nucleotide sequence ID" value="NM_001104161.3"/>
</dbReference>
<dbReference type="RefSeq" id="NP_001097632.1">
    <molecule id="Q9VVE5-3"/>
    <property type="nucleotide sequence ID" value="NM_001104162.4"/>
</dbReference>
<dbReference type="RefSeq" id="NP_730245.2">
    <molecule id="Q9VVE5-1"/>
    <property type="nucleotide sequence ID" value="NM_168718.3"/>
</dbReference>
<dbReference type="SMR" id="Q9VVE5"/>
<dbReference type="BioGRID" id="65211">
    <property type="interactions" value="26"/>
</dbReference>
<dbReference type="DIP" id="DIP-19056N"/>
<dbReference type="FunCoup" id="Q9VVE5">
    <property type="interactions" value="173"/>
</dbReference>
<dbReference type="IntAct" id="Q9VVE5">
    <property type="interactions" value="24"/>
</dbReference>
<dbReference type="STRING" id="7227.FBpp0112339"/>
<dbReference type="GlyGen" id="Q9VVE5">
    <property type="glycosylation" value="2 sites, 1 O-linked glycan (1 site)"/>
</dbReference>
<dbReference type="PaxDb" id="7227-FBpp0112339"/>
<dbReference type="DNASU" id="39919"/>
<dbReference type="EnsemblMetazoa" id="FBtr0075285">
    <molecule id="Q9VVE5-1"/>
    <property type="protein sequence ID" value="FBpp0075045"/>
    <property type="gene ID" value="FBgn0260943"/>
</dbReference>
<dbReference type="EnsemblMetazoa" id="FBtr0113427">
    <molecule id="Q9VVE5-2"/>
    <property type="protein sequence ID" value="FBpp0112339"/>
    <property type="gene ID" value="FBgn0260943"/>
</dbReference>
<dbReference type="EnsemblMetazoa" id="FBtr0113428">
    <molecule id="Q9VVE5-3"/>
    <property type="protein sequence ID" value="FBpp0112340"/>
    <property type="gene ID" value="FBgn0260943"/>
</dbReference>
<dbReference type="GeneID" id="39919"/>
<dbReference type="KEGG" id="dme:Dmel_CG32169"/>
<dbReference type="UCSC" id="CG32169-RA">
    <molecule id="Q9VVE5-1"/>
    <property type="organism name" value="d. melanogaster"/>
</dbReference>
<dbReference type="UCSC" id="CG32169-RB">
    <property type="organism name" value="d. melanogaster"/>
</dbReference>
<dbReference type="UCSC" id="CG32169-RC">
    <property type="organism name" value="d. melanogaster"/>
</dbReference>
<dbReference type="AGR" id="FB:FBgn0260943"/>
<dbReference type="CTD" id="39919"/>
<dbReference type="FlyBase" id="FBgn0260943">
    <property type="gene designation" value="Rbp6"/>
</dbReference>
<dbReference type="VEuPathDB" id="VectorBase:FBgn0260943"/>
<dbReference type="eggNOG" id="KOG4205">
    <property type="taxonomic scope" value="Eukaryota"/>
</dbReference>
<dbReference type="GeneTree" id="ENSGT00940000155420"/>
<dbReference type="InParanoid" id="Q9VVE5"/>
<dbReference type="OrthoDB" id="1875751at2759"/>
<dbReference type="PhylomeDB" id="Q9VVE5"/>
<dbReference type="SignaLink" id="Q9VVE5"/>
<dbReference type="BioGRID-ORCS" id="39919">
    <property type="hits" value="0 hits in 3 CRISPR screens"/>
</dbReference>
<dbReference type="GenomeRNAi" id="39919"/>
<dbReference type="PRO" id="PR:Q9VVE5"/>
<dbReference type="Proteomes" id="UP000000803">
    <property type="component" value="Chromosome 3L"/>
</dbReference>
<dbReference type="Bgee" id="FBgn0260943">
    <property type="expression patterns" value="Expressed in lamina monopolar neuron L1 (Drosophila) in insect head and 258 other cell types or tissues"/>
</dbReference>
<dbReference type="ExpressionAtlas" id="Q9VVE5">
    <property type="expression patterns" value="baseline and differential"/>
</dbReference>
<dbReference type="GO" id="GO:0005737">
    <property type="term" value="C:cytoplasm"/>
    <property type="evidence" value="ECO:0000250"/>
    <property type="project" value="UniProtKB"/>
</dbReference>
<dbReference type="GO" id="GO:0003729">
    <property type="term" value="F:mRNA binding"/>
    <property type="evidence" value="ECO:0000318"/>
    <property type="project" value="GO_Central"/>
</dbReference>
<dbReference type="GO" id="GO:0008266">
    <property type="term" value="F:poly(U) RNA binding"/>
    <property type="evidence" value="ECO:0000250"/>
    <property type="project" value="UniProtKB"/>
</dbReference>
<dbReference type="GO" id="GO:0003727">
    <property type="term" value="F:single-stranded RNA binding"/>
    <property type="evidence" value="ECO:0000250"/>
    <property type="project" value="UniProtKB"/>
</dbReference>
<dbReference type="GO" id="GO:0006417">
    <property type="term" value="P:regulation of translation"/>
    <property type="evidence" value="ECO:0000318"/>
    <property type="project" value="GO_Central"/>
</dbReference>
<dbReference type="GO" id="GO:0048864">
    <property type="term" value="P:stem cell development"/>
    <property type="evidence" value="ECO:0000250"/>
    <property type="project" value="UniProtKB"/>
</dbReference>
<dbReference type="CDD" id="cd12576">
    <property type="entry name" value="RRM1_MSI"/>
    <property type="match status" value="1"/>
</dbReference>
<dbReference type="CDD" id="cd12323">
    <property type="entry name" value="RRM2_MSI"/>
    <property type="match status" value="1"/>
</dbReference>
<dbReference type="FunFam" id="3.30.70.330:FF:000536">
    <property type="entry name" value="RNA-binding protein 6, isoform G"/>
    <property type="match status" value="1"/>
</dbReference>
<dbReference type="FunFam" id="3.30.70.330:FF:000020">
    <property type="entry name" value="RNA-binding protein Musashi homolog 2 isoform X1"/>
    <property type="match status" value="1"/>
</dbReference>
<dbReference type="Gene3D" id="3.30.70.330">
    <property type="match status" value="2"/>
</dbReference>
<dbReference type="InterPro" id="IPR034126">
    <property type="entry name" value="MSI_RRM2"/>
</dbReference>
<dbReference type="InterPro" id="IPR012677">
    <property type="entry name" value="Nucleotide-bd_a/b_plait_sf"/>
</dbReference>
<dbReference type="InterPro" id="IPR035979">
    <property type="entry name" value="RBD_domain_sf"/>
</dbReference>
<dbReference type="InterPro" id="IPR000504">
    <property type="entry name" value="RRM_dom"/>
</dbReference>
<dbReference type="PANTHER" id="PTHR48032">
    <property type="entry name" value="RNA-BINDING PROTEIN MUSASHI HOMOLOG RBP6"/>
    <property type="match status" value="1"/>
</dbReference>
<dbReference type="PANTHER" id="PTHR48032:SF18">
    <property type="entry name" value="RRM DOMAIN-CONTAINING PROTEIN"/>
    <property type="match status" value="1"/>
</dbReference>
<dbReference type="Pfam" id="PF00076">
    <property type="entry name" value="RRM_1"/>
    <property type="match status" value="2"/>
</dbReference>
<dbReference type="SMART" id="SM00360">
    <property type="entry name" value="RRM"/>
    <property type="match status" value="2"/>
</dbReference>
<dbReference type="SUPFAM" id="SSF54928">
    <property type="entry name" value="RNA-binding domain, RBD"/>
    <property type="match status" value="2"/>
</dbReference>
<dbReference type="PROSITE" id="PS50102">
    <property type="entry name" value="RRM"/>
    <property type="match status" value="2"/>
</dbReference>
<protein>
    <recommendedName>
        <fullName evidence="1 7">RNA-binding protein Musashi homolog Rbp6</fullName>
    </recommendedName>
</protein>
<sequence>MDIKIEQQQQQQQVELGPCSPSEVPNDPGKMFIGGLSWQTSPESLRDYFGRYGDISEAMVMKDPTTRRSRGFGFVTFSDPNSVDKVLTQGTHELDGKKVDPKVAFPRRAHPKMVTRTKKIFVGGLSAPTTLEDVKSYFEQFGPIEDAMLMFDKQTNRHRGFGFVTFQSEDVVDKVCEIHFHEINNKMVECKKAQPKEVMLPANLAKTRAAGRSAYDNIMWGLGTLPEGFPAAAYAAYAAGRGYSGYPSFGLPYPTVDLTNGQLTPNNNTPLLTQALSVMNNYQAAAAAAHSYGPSASPHAAAANTATRQGFPSTNSPGPTIDMYSSAAADNVGYVQATSPQPSGFPIAVSRAPLNYSPIYSLNFAMANI</sequence>
<reference evidence="11" key="1">
    <citation type="journal article" date="2000" name="Science">
        <title>The genome sequence of Drosophila melanogaster.</title>
        <authorList>
            <person name="Adams M.D."/>
            <person name="Celniker S.E."/>
            <person name="Holt R.A."/>
            <person name="Evans C.A."/>
            <person name="Gocayne J.D."/>
            <person name="Amanatides P.G."/>
            <person name="Scherer S.E."/>
            <person name="Li P.W."/>
            <person name="Hoskins R.A."/>
            <person name="Galle R.F."/>
            <person name="George R.A."/>
            <person name="Lewis S.E."/>
            <person name="Richards S."/>
            <person name="Ashburner M."/>
            <person name="Henderson S.N."/>
            <person name="Sutton G.G."/>
            <person name="Wortman J.R."/>
            <person name="Yandell M.D."/>
            <person name="Zhang Q."/>
            <person name="Chen L.X."/>
            <person name="Brandon R.C."/>
            <person name="Rogers Y.-H.C."/>
            <person name="Blazej R.G."/>
            <person name="Champe M."/>
            <person name="Pfeiffer B.D."/>
            <person name="Wan K.H."/>
            <person name="Doyle C."/>
            <person name="Baxter E.G."/>
            <person name="Helt G."/>
            <person name="Nelson C.R."/>
            <person name="Miklos G.L.G."/>
            <person name="Abril J.F."/>
            <person name="Agbayani A."/>
            <person name="An H.-J."/>
            <person name="Andrews-Pfannkoch C."/>
            <person name="Baldwin D."/>
            <person name="Ballew R.M."/>
            <person name="Basu A."/>
            <person name="Baxendale J."/>
            <person name="Bayraktaroglu L."/>
            <person name="Beasley E.M."/>
            <person name="Beeson K.Y."/>
            <person name="Benos P.V."/>
            <person name="Berman B.P."/>
            <person name="Bhandari D."/>
            <person name="Bolshakov S."/>
            <person name="Borkova D."/>
            <person name="Botchan M.R."/>
            <person name="Bouck J."/>
            <person name="Brokstein P."/>
            <person name="Brottier P."/>
            <person name="Burtis K.C."/>
            <person name="Busam D.A."/>
            <person name="Butler H."/>
            <person name="Cadieu E."/>
            <person name="Center A."/>
            <person name="Chandra I."/>
            <person name="Cherry J.M."/>
            <person name="Cawley S."/>
            <person name="Dahlke C."/>
            <person name="Davenport L.B."/>
            <person name="Davies P."/>
            <person name="de Pablos B."/>
            <person name="Delcher A."/>
            <person name="Deng Z."/>
            <person name="Mays A.D."/>
            <person name="Dew I."/>
            <person name="Dietz S.M."/>
            <person name="Dodson K."/>
            <person name="Doup L.E."/>
            <person name="Downes M."/>
            <person name="Dugan-Rocha S."/>
            <person name="Dunkov B.C."/>
            <person name="Dunn P."/>
            <person name="Durbin K.J."/>
            <person name="Evangelista C.C."/>
            <person name="Ferraz C."/>
            <person name="Ferriera S."/>
            <person name="Fleischmann W."/>
            <person name="Fosler C."/>
            <person name="Gabrielian A.E."/>
            <person name="Garg N.S."/>
            <person name="Gelbart W.M."/>
            <person name="Glasser K."/>
            <person name="Glodek A."/>
            <person name="Gong F."/>
            <person name="Gorrell J.H."/>
            <person name="Gu Z."/>
            <person name="Guan P."/>
            <person name="Harris M."/>
            <person name="Harris N.L."/>
            <person name="Harvey D.A."/>
            <person name="Heiman T.J."/>
            <person name="Hernandez J.R."/>
            <person name="Houck J."/>
            <person name="Hostin D."/>
            <person name="Houston K.A."/>
            <person name="Howland T.J."/>
            <person name="Wei M.-H."/>
            <person name="Ibegwam C."/>
            <person name="Jalali M."/>
            <person name="Kalush F."/>
            <person name="Karpen G.H."/>
            <person name="Ke Z."/>
            <person name="Kennison J.A."/>
            <person name="Ketchum K.A."/>
            <person name="Kimmel B.E."/>
            <person name="Kodira C.D."/>
            <person name="Kraft C.L."/>
            <person name="Kravitz S."/>
            <person name="Kulp D."/>
            <person name="Lai Z."/>
            <person name="Lasko P."/>
            <person name="Lei Y."/>
            <person name="Levitsky A.A."/>
            <person name="Li J.H."/>
            <person name="Li Z."/>
            <person name="Liang Y."/>
            <person name="Lin X."/>
            <person name="Liu X."/>
            <person name="Mattei B."/>
            <person name="McIntosh T.C."/>
            <person name="McLeod M.P."/>
            <person name="McPherson D."/>
            <person name="Merkulov G."/>
            <person name="Milshina N.V."/>
            <person name="Mobarry C."/>
            <person name="Morris J."/>
            <person name="Moshrefi A."/>
            <person name="Mount S.M."/>
            <person name="Moy M."/>
            <person name="Murphy B."/>
            <person name="Murphy L."/>
            <person name="Muzny D.M."/>
            <person name="Nelson D.L."/>
            <person name="Nelson D.R."/>
            <person name="Nelson K.A."/>
            <person name="Nixon K."/>
            <person name="Nusskern D.R."/>
            <person name="Pacleb J.M."/>
            <person name="Palazzolo M."/>
            <person name="Pittman G.S."/>
            <person name="Pan S."/>
            <person name="Pollard J."/>
            <person name="Puri V."/>
            <person name="Reese M.G."/>
            <person name="Reinert K."/>
            <person name="Remington K."/>
            <person name="Saunders R.D.C."/>
            <person name="Scheeler F."/>
            <person name="Shen H."/>
            <person name="Shue B.C."/>
            <person name="Siden-Kiamos I."/>
            <person name="Simpson M."/>
            <person name="Skupski M.P."/>
            <person name="Smith T.J."/>
            <person name="Spier E."/>
            <person name="Spradling A.C."/>
            <person name="Stapleton M."/>
            <person name="Strong R."/>
            <person name="Sun E."/>
            <person name="Svirskas R."/>
            <person name="Tector C."/>
            <person name="Turner R."/>
            <person name="Venter E."/>
            <person name="Wang A.H."/>
            <person name="Wang X."/>
            <person name="Wang Z.-Y."/>
            <person name="Wassarman D.A."/>
            <person name="Weinstock G.M."/>
            <person name="Weissenbach J."/>
            <person name="Williams S.M."/>
            <person name="Woodage T."/>
            <person name="Worley K.C."/>
            <person name="Wu D."/>
            <person name="Yang S."/>
            <person name="Yao Q.A."/>
            <person name="Ye J."/>
            <person name="Yeh R.-F."/>
            <person name="Zaveri J.S."/>
            <person name="Zhan M."/>
            <person name="Zhang G."/>
            <person name="Zhao Q."/>
            <person name="Zheng L."/>
            <person name="Zheng X.H."/>
            <person name="Zhong F.N."/>
            <person name="Zhong W."/>
            <person name="Zhou X."/>
            <person name="Zhu S.C."/>
            <person name="Zhu X."/>
            <person name="Smith H.O."/>
            <person name="Gibbs R.A."/>
            <person name="Myers E.W."/>
            <person name="Rubin G.M."/>
            <person name="Venter J.C."/>
        </authorList>
    </citation>
    <scope>NUCLEOTIDE SEQUENCE [LARGE SCALE GENOMIC DNA]</scope>
    <source>
        <strain>Berkeley</strain>
    </source>
</reference>
<reference evidence="8 11" key="2">
    <citation type="journal article" date="2002" name="Genome Biol.">
        <title>Annotation of the Drosophila melanogaster euchromatic genome: a systematic review.</title>
        <authorList>
            <person name="Misra S."/>
            <person name="Crosby M.A."/>
            <person name="Mungall C.J."/>
            <person name="Matthews B.B."/>
            <person name="Campbell K.S."/>
            <person name="Hradecky P."/>
            <person name="Huang Y."/>
            <person name="Kaminker J.S."/>
            <person name="Millburn G.H."/>
            <person name="Prochnik S.E."/>
            <person name="Smith C.D."/>
            <person name="Tupy J.L."/>
            <person name="Whitfield E.J."/>
            <person name="Bayraktaroglu L."/>
            <person name="Berman B.P."/>
            <person name="Bettencourt B.R."/>
            <person name="Celniker S.E."/>
            <person name="de Grey A.D.N.J."/>
            <person name="Drysdale R.A."/>
            <person name="Harris N.L."/>
            <person name="Richter J."/>
            <person name="Russo S."/>
            <person name="Schroeder A.J."/>
            <person name="Shu S.Q."/>
            <person name="Stapleton M."/>
            <person name="Yamada C."/>
            <person name="Ashburner M."/>
            <person name="Gelbart W.M."/>
            <person name="Rubin G.M."/>
            <person name="Lewis S.E."/>
        </authorList>
    </citation>
    <scope>GENOME REANNOTATION</scope>
    <scope>ALTERNATIVE SPLICING</scope>
    <source>
        <strain>Berkeley</strain>
    </source>
</reference>
<reference evidence="8 10" key="3">
    <citation type="journal article" date="2002" name="Genome Biol.">
        <title>A Drosophila full-length cDNA resource.</title>
        <authorList>
            <person name="Stapleton M."/>
            <person name="Carlson J.W."/>
            <person name="Brokstein P."/>
            <person name="Yu C."/>
            <person name="Champe M."/>
            <person name="George R.A."/>
            <person name="Guarin H."/>
            <person name="Kronmiller B."/>
            <person name="Pacleb J.M."/>
            <person name="Park S."/>
            <person name="Wan K.H."/>
            <person name="Rubin G.M."/>
            <person name="Celniker S.E."/>
        </authorList>
    </citation>
    <scope>NUCLEOTIDE SEQUENCE [LARGE SCALE MRNA] (ISOFORM A)</scope>
    <source>
        <strain evidence="10">Berkeley</strain>
        <tissue evidence="5">Embryo</tissue>
    </source>
</reference>
<reference evidence="8 9" key="4">
    <citation type="journal article" date="1993" name="Mol. Cell. Biol.">
        <title>Isolation of RRM-type RNA-binding protein genes and the analysis of their relatedness by using a numerical approach.</title>
        <authorList>
            <person name="Kim Y.-J."/>
            <person name="Baker B.S."/>
        </authorList>
    </citation>
    <scope>NUCLEOTIDE SEQUENCE [MRNA] OF 32-75 (ISOFORMS A/B)</scope>
</reference>
<proteinExistence type="evidence at transcript level"/>
<organism>
    <name type="scientific">Drosophila melanogaster</name>
    <name type="common">Fruit fly</name>
    <dbReference type="NCBI Taxonomy" id="7227"/>
    <lineage>
        <taxon>Eukaryota</taxon>
        <taxon>Metazoa</taxon>
        <taxon>Ecdysozoa</taxon>
        <taxon>Arthropoda</taxon>
        <taxon>Hexapoda</taxon>
        <taxon>Insecta</taxon>
        <taxon>Pterygota</taxon>
        <taxon>Neoptera</taxon>
        <taxon>Endopterygota</taxon>
        <taxon>Diptera</taxon>
        <taxon>Brachycera</taxon>
        <taxon>Muscomorpha</taxon>
        <taxon>Ephydroidea</taxon>
        <taxon>Drosophilidae</taxon>
        <taxon>Drosophila</taxon>
        <taxon>Sophophora</taxon>
    </lineage>
</organism>
<gene>
    <name evidence="7" type="primary">Rbp6</name>
    <name evidence="7" type="synonym">RRM6</name>
    <name type="ORF">CG32169</name>
</gene>
<feature type="chain" id="PRO_0000374051" description="RNA-binding protein Musashi homolog Rbp6">
    <location>
        <begin position="1"/>
        <end position="369"/>
    </location>
</feature>
<feature type="domain" description="RRM 1" evidence="2">
    <location>
        <begin position="29"/>
        <end position="108"/>
    </location>
</feature>
<feature type="domain" description="RRM 2" evidence="2">
    <location>
        <begin position="118"/>
        <end position="195"/>
    </location>
</feature>
<feature type="region of interest" description="Disordered" evidence="3">
    <location>
        <begin position="1"/>
        <end position="23"/>
    </location>
</feature>
<feature type="region of interest" description="Disordered" evidence="3">
    <location>
        <begin position="298"/>
        <end position="319"/>
    </location>
</feature>
<feature type="compositionally biased region" description="Low complexity" evidence="3">
    <location>
        <begin position="298"/>
        <end position="310"/>
    </location>
</feature>
<feature type="splice variant" id="VSP_053086" description="In isoform C." evidence="6">
    <location>
        <begin position="1"/>
        <end position="112"/>
    </location>
</feature>
<feature type="splice variant" id="VSP_053087" description="In isoform B." evidence="6">
    <original>DNIMWGLGTLPEGFPAAAYAAYAAGRGYSGYPSFGLPYPTVDLTNGQLTPNNNTPLLTQALSVMNNYQAAAAAAHSYGPSASPHAAAANTATRQGFPSTNSPGPTIDMYSSAAADNVGYVQATSPQPSGFPIAVSRAPLNYSPIYSLNFAMANI</original>
    <variation>GELVVWGSSHAHSTAATSAAAAGLLPSSLAAAASVLQQQQQQQQQQQQQQQQQQQHHQQLHHTHPQSPAHSHAHHPHTHSHSQLLGSLRYTPYPLPAHLSAAAVVVAQQQHHHQQQQQQQQQQQQQQVVAAQQQHQQQQSLAQVVAAAAGAAPGLLPLANPAPPATPSLLQFAAGQSNAALANSLYADAAAVVGYKRLLAAAAVSSGLRAPTTALGALQAAAANVPAAAAAAQLQQAQLRQNAALAAAHYPLSELLAMQGGMEMGAGANSAAAAAASLYQLPGI</variation>
    <location>
        <begin position="216"/>
        <end position="369"/>
    </location>
</feature>
<feature type="sequence conflict" description="In Ref. 4; AAM52738." evidence="8" ref="4">
    <original>I</original>
    <variation>V</variation>
    <location>
        <position position="33"/>
    </location>
</feature>
<feature type="sequence conflict" description="In Ref. 4; AAM52738." evidence="8" ref="4">
    <original>G</original>
    <variation>A</variation>
    <location>
        <position position="73"/>
    </location>
</feature>
<evidence type="ECO:0000250" key="1">
    <source>
        <dbReference type="UniProtKB" id="Q920Q6"/>
    </source>
</evidence>
<evidence type="ECO:0000255" key="2">
    <source>
        <dbReference type="PROSITE-ProRule" id="PRU00176"/>
    </source>
</evidence>
<evidence type="ECO:0000256" key="3">
    <source>
        <dbReference type="SAM" id="MobiDB-lite"/>
    </source>
</evidence>
<evidence type="ECO:0000269" key="4">
    <source>
    </source>
</evidence>
<evidence type="ECO:0000269" key="5">
    <source>
    </source>
</evidence>
<evidence type="ECO:0000303" key="6">
    <source>
    </source>
</evidence>
<evidence type="ECO:0000303" key="7">
    <source>
    </source>
</evidence>
<evidence type="ECO:0000305" key="8"/>
<evidence type="ECO:0000312" key="9">
    <source>
        <dbReference type="EMBL" id="AAB24627.1"/>
    </source>
</evidence>
<evidence type="ECO:0000312" key="10">
    <source>
        <dbReference type="EMBL" id="AAM52738.1"/>
    </source>
</evidence>
<evidence type="ECO:0000312" key="11">
    <source>
        <dbReference type="EMBL" id="ABW08559.1"/>
    </source>
</evidence>
<accession>Q9VVE5</accession>
<accession>A8JNU7</accession>
<accession>A8JNU8</accession>
<accession>Q26276</accession>
<accession>Q8MQZ1</accession>
<keyword id="KW-0025">Alternative splicing</keyword>
<keyword id="KW-0963">Cytoplasm</keyword>
<keyword id="KW-1185">Reference proteome</keyword>
<keyword id="KW-0677">Repeat</keyword>
<keyword id="KW-0694">RNA-binding</keyword>
<comment type="function">
    <text evidence="1">RNA binding protein that regulates the expression of target mRNAs at the translation level. May play a role in the proliferation and maintenance of stem cells in the central nervous system (By similarity).</text>
</comment>
<comment type="subcellular location">
    <subcellularLocation>
        <location evidence="1">Cytoplasm</location>
    </subcellularLocation>
</comment>
<comment type="alternative products">
    <event type="alternative splicing"/>
    <isoform>
        <id>Q9VVE5-1</id>
        <name evidence="4">A</name>
        <sequence type="displayed"/>
    </isoform>
    <isoform>
        <id>Q9VVE5-2</id>
        <name evidence="4">B</name>
        <sequence type="described" ref="VSP_053087"/>
    </isoform>
    <isoform>
        <id>Q9VVE5-3</id>
        <name evidence="4">C</name>
        <sequence type="described" ref="VSP_053086"/>
    </isoform>
</comment>
<comment type="similarity">
    <text evidence="8">Belongs to the Musashi family.</text>
</comment>